<protein>
    <recommendedName>
        <fullName evidence="1">Vitamin B12-binding protein</fullName>
    </recommendedName>
</protein>
<reference key="1">
    <citation type="submission" date="2007-02" db="EMBL/GenBank/DDBJ databases">
        <title>Complete sequence of chromosome of Yersinia pestis Pestoides F.</title>
        <authorList>
            <consortium name="US DOE Joint Genome Institute"/>
            <person name="Copeland A."/>
            <person name="Lucas S."/>
            <person name="Lapidus A."/>
            <person name="Barry K."/>
            <person name="Detter J.C."/>
            <person name="Glavina del Rio T."/>
            <person name="Hammon N."/>
            <person name="Israni S."/>
            <person name="Dalin E."/>
            <person name="Tice H."/>
            <person name="Pitluck S."/>
            <person name="Di Bartolo G."/>
            <person name="Chain P."/>
            <person name="Malfatti S."/>
            <person name="Shin M."/>
            <person name="Vergez L."/>
            <person name="Schmutz J."/>
            <person name="Larimer F."/>
            <person name="Land M."/>
            <person name="Hauser L."/>
            <person name="Worsham P."/>
            <person name="Chu M."/>
            <person name="Bearden S."/>
            <person name="Garcia E."/>
            <person name="Richardson P."/>
        </authorList>
    </citation>
    <scope>NUCLEOTIDE SEQUENCE [LARGE SCALE GENOMIC DNA]</scope>
    <source>
        <strain>Pestoides F</strain>
    </source>
</reference>
<organism>
    <name type="scientific">Yersinia pestis (strain Pestoides F)</name>
    <dbReference type="NCBI Taxonomy" id="386656"/>
    <lineage>
        <taxon>Bacteria</taxon>
        <taxon>Pseudomonadati</taxon>
        <taxon>Pseudomonadota</taxon>
        <taxon>Gammaproteobacteria</taxon>
        <taxon>Enterobacterales</taxon>
        <taxon>Yersiniaceae</taxon>
        <taxon>Yersinia</taxon>
    </lineage>
</organism>
<dbReference type="EMBL" id="CP000668">
    <property type="protein sequence ID" value="ABP41333.1"/>
    <property type="molecule type" value="Genomic_DNA"/>
</dbReference>
<dbReference type="RefSeq" id="WP_002222100.1">
    <property type="nucleotide sequence ID" value="NZ_CP009715.1"/>
</dbReference>
<dbReference type="SMR" id="A4TPX1"/>
<dbReference type="GeneID" id="57975324"/>
<dbReference type="KEGG" id="ypp:YPDSF_2973"/>
<dbReference type="GO" id="GO:0042597">
    <property type="term" value="C:periplasmic space"/>
    <property type="evidence" value="ECO:0007669"/>
    <property type="project" value="UniProtKB-SubCell"/>
</dbReference>
<dbReference type="GO" id="GO:0031419">
    <property type="term" value="F:cobalamin binding"/>
    <property type="evidence" value="ECO:0007669"/>
    <property type="project" value="InterPro"/>
</dbReference>
<dbReference type="GO" id="GO:0015889">
    <property type="term" value="P:cobalamin transport"/>
    <property type="evidence" value="ECO:0007669"/>
    <property type="project" value="UniProtKB-UniRule"/>
</dbReference>
<dbReference type="CDD" id="cd01144">
    <property type="entry name" value="BtuF"/>
    <property type="match status" value="1"/>
</dbReference>
<dbReference type="Gene3D" id="3.40.50.1980">
    <property type="entry name" value="Nitrogenase molybdenum iron protein domain"/>
    <property type="match status" value="2"/>
</dbReference>
<dbReference type="HAMAP" id="MF_01000">
    <property type="entry name" value="BtuF"/>
    <property type="match status" value="1"/>
</dbReference>
<dbReference type="InterPro" id="IPR002491">
    <property type="entry name" value="ABC_transptr_periplasmic_BD"/>
</dbReference>
<dbReference type="InterPro" id="IPR023544">
    <property type="entry name" value="ABC_transptr_vit_B12-bd"/>
</dbReference>
<dbReference type="InterPro" id="IPR054828">
    <property type="entry name" value="Vit_B12_bind_prot"/>
</dbReference>
<dbReference type="InterPro" id="IPR051030">
    <property type="entry name" value="Vitamin_B12-ABC_binding"/>
</dbReference>
<dbReference type="NCBIfam" id="NF002894">
    <property type="entry name" value="PRK03379.1"/>
    <property type="match status" value="1"/>
</dbReference>
<dbReference type="NCBIfam" id="NF038402">
    <property type="entry name" value="TroA_like"/>
    <property type="match status" value="1"/>
</dbReference>
<dbReference type="PANTHER" id="PTHR42860">
    <property type="entry name" value="VITAMIN B12-BINDING PROTEIN"/>
    <property type="match status" value="1"/>
</dbReference>
<dbReference type="PANTHER" id="PTHR42860:SF1">
    <property type="entry name" value="VITAMIN B12-BINDING PROTEIN"/>
    <property type="match status" value="1"/>
</dbReference>
<dbReference type="Pfam" id="PF01497">
    <property type="entry name" value="Peripla_BP_2"/>
    <property type="match status" value="1"/>
</dbReference>
<dbReference type="SUPFAM" id="SSF53807">
    <property type="entry name" value="Helical backbone' metal receptor"/>
    <property type="match status" value="1"/>
</dbReference>
<dbReference type="PROSITE" id="PS50983">
    <property type="entry name" value="FE_B12_PBP"/>
    <property type="match status" value="1"/>
</dbReference>
<name>BTUF_YERPP</name>
<comment type="function">
    <text evidence="1">Part of the ABC transporter complex BtuCDF involved in vitamin B12 import. Binds vitamin B12 and delivers it to the periplasmic surface of BtuC.</text>
</comment>
<comment type="subunit">
    <text evidence="1">The complex is composed of two ATP-binding proteins (BtuD), two transmembrane proteins (BtuC) and a solute-binding protein (BtuF).</text>
</comment>
<comment type="subcellular location">
    <subcellularLocation>
        <location evidence="1">Periplasm</location>
    </subcellularLocation>
</comment>
<comment type="similarity">
    <text evidence="1">Belongs to the BtuF family.</text>
</comment>
<evidence type="ECO:0000255" key="1">
    <source>
        <dbReference type="HAMAP-Rule" id="MF_01000"/>
    </source>
</evidence>
<keyword id="KW-1015">Disulfide bond</keyword>
<keyword id="KW-0574">Periplasm</keyword>
<keyword id="KW-0732">Signal</keyword>
<keyword id="KW-0813">Transport</keyword>
<feature type="signal peptide" evidence="1">
    <location>
        <begin position="1"/>
        <end position="27"/>
    </location>
</feature>
<feature type="chain" id="PRO_5000236988" description="Vitamin B12-binding protein">
    <location>
        <begin position="28"/>
        <end position="280"/>
    </location>
</feature>
<feature type="domain" description="Fe/B12 periplasmic-binding" evidence="1">
    <location>
        <begin position="30"/>
        <end position="277"/>
    </location>
</feature>
<feature type="binding site" evidence="1">
    <location>
        <position position="57"/>
    </location>
    <ligand>
        <name>cyanocob(III)alamin</name>
        <dbReference type="ChEBI" id="CHEBI:17439"/>
    </ligand>
</feature>
<feature type="site" description="Important for BtuC binding" evidence="1">
    <location>
        <position position="79"/>
    </location>
</feature>
<feature type="site" description="Important for BtuC binding" evidence="1">
    <location>
        <position position="209"/>
    </location>
</feature>
<feature type="disulfide bond" evidence="1">
    <location>
        <begin position="190"/>
        <end position="266"/>
    </location>
</feature>
<proteinExistence type="inferred from homology"/>
<sequence length="280" mass="30813">MMPLGLFPLPRAAAVLLISLLTLPAQAAERVISLSPSTTELAYAAGLGDKLVAVSAYSDYPESAKKLEHVASWQGINVERILALKPDLILAWRGGNPQRPLDQLAALGIPIFYSDPTHIDQIASDLDKLAQYSPHPEQAHQAAEQFRQHVNTLRDRYARSQPKRTFLQFGTQPLFTSSGHTLQSEVVSLCGGENIFADSRVPWPQVSREQVMTRKPQVIVVSGTQSQVDNVSAFWLPQLVVPVIALNEDWFNRASPRILLAAQQLCQQMASIPTPVAESH</sequence>
<accession>A4TPX1</accession>
<gene>
    <name evidence="1" type="primary">btuF</name>
    <name type="ordered locus">YPDSF_2973</name>
</gene>